<keyword id="KW-0009">Actin-binding</keyword>
<keyword id="KW-0965">Cell junction</keyword>
<keyword id="KW-0963">Cytoplasm</keyword>
<keyword id="KW-0206">Cytoskeleton</keyword>
<keyword id="KW-1185">Reference proteome</keyword>
<keyword id="KW-0677">Repeat</keyword>
<feature type="chain" id="PRO_0000437691" description="Thymosin beta" evidence="3">
    <location>
        <begin position="1"/>
        <end position="151"/>
    </location>
</feature>
<feature type="repeat" description="1" evidence="1">
    <location>
        <begin position="24"/>
        <end position="29"/>
    </location>
</feature>
<feature type="repeat" description="2" evidence="1">
    <location>
        <begin position="62"/>
        <end position="67"/>
    </location>
</feature>
<feature type="repeat" description="3" evidence="1">
    <location>
        <begin position="100"/>
        <end position="105"/>
    </location>
</feature>
<feature type="repeat" description="4" evidence="1">
    <location>
        <begin position="134"/>
        <end position="139"/>
    </location>
</feature>
<feature type="region of interest" description="4 X 6 AA repeat of L-[KH]-[KSH]-[VT]-[EP]-[TV]" evidence="1">
    <location>
        <begin position="24"/>
        <end position="139"/>
    </location>
</feature>
<feature type="mutagenesis site" description="Moderate reduction in actin polymerization inhibition. Complete loss of actin sequestering activity and moderate reduction in actin polymerization inhibition; when associated with 100-A--A-103 and 134-A--A-137. Complete loss of actin sequestering activity and severe reduction in actin polymerization inhibition; when associated with 62-A--A-65 and 134-A--A-137. Moderate loss of actin sequestering activity and moderate reduction in actin polymerization inhibition; when associated with 62-A--A-65 and 100-A--A-103." evidence="1">
    <original>LKKV</original>
    <variation>AAAA</variation>
    <location>
        <begin position="24"/>
        <end position="27"/>
    </location>
</feature>
<feature type="mutagenesis site" description="Severe reduction in actin polymerization inhibition. Complete loss of actin sequestering activity and severe reduction in actin polymerization inhibition; when associated with 24-A--A-27 and 134-A--A-137. Severe loss of actin sequestering activity and moderate reduction in actin polymerization inhibition; when associated with 100-A--A-103 and 134-A--A-137. Moderate loss of actin sequestering activity and slight reduction in actin polymerization inhibition; when associate d with 24-A--A-27 and 100-A--A-103." evidence="1">
    <original>LHST</original>
    <variation>AAAA</variation>
    <location>
        <begin position="62"/>
        <end position="65"/>
    </location>
</feature>
<feature type="mutagenesis site" description="Moderate reduction in actin polymerization inhibition. Complete loss of actin sequestering activity and severe reduction in actin polymerization inhibition; when associated with 24-A--A-27 and 134-A--A-137. Severe loss of actin sequestering activity and moderate reduction in actin polymerization inhibition; when associated with 62-A--A-65 and 134-A--A-137. Moderate loss of actin sequestering activity and slight reduction in actin polymerization inhibition; when associated with 24-A--A-27 and 62-A--A-65." evidence="1">
    <original>LKKT</original>
    <variation>AAAA</variation>
    <location>
        <begin position="100"/>
        <end position="103"/>
    </location>
</feature>
<feature type="mutagenesis site" description="Slight reduction in actin polymerization inhibition. Complete loss of actin sequestering activity and severe reduction in actin polymerization inhibition; when associated with 24-A--A-27 and 62-A--A-65. Complete loss of actin sequestering activity and moderate reduction in actin polymerization inhibition; when associated with 24-A--A-27 and 100-A--A-137. Severe loss of actin sequestering activity and moderate reduction in actin polymerization inhibition; when associated with 62-A--A-65 and 100-A--A-103." evidence="1">
    <original>LHHV</original>
    <variation>AAAA</variation>
    <location>
        <begin position="134"/>
        <end position="137"/>
    </location>
</feature>
<dbReference type="EMBL" id="BX284606">
    <property type="protein sequence ID" value="CCD69031.1"/>
    <property type="molecule type" value="Genomic_DNA"/>
</dbReference>
<dbReference type="PIR" id="T32473">
    <property type="entry name" value="T32473"/>
</dbReference>
<dbReference type="RefSeq" id="NP_509430.1">
    <property type="nucleotide sequence ID" value="NM_077029.5"/>
</dbReference>
<dbReference type="SMR" id="O17389"/>
<dbReference type="FunCoup" id="O17389">
    <property type="interactions" value="1161"/>
</dbReference>
<dbReference type="STRING" id="6239.F08F1.8.1"/>
<dbReference type="PaxDb" id="6239-F08F1.8"/>
<dbReference type="PeptideAtlas" id="O17389"/>
<dbReference type="EnsemblMetazoa" id="F08F1.8.1">
    <property type="protein sequence ID" value="F08F1.8.1"/>
    <property type="gene ID" value="WBGene00006649"/>
</dbReference>
<dbReference type="EnsemblMetazoa" id="F08F1.8.2">
    <property type="protein sequence ID" value="F08F1.8.2"/>
    <property type="gene ID" value="WBGene00006649"/>
</dbReference>
<dbReference type="GeneID" id="181097"/>
<dbReference type="KEGG" id="cel:CELE_F08F1.8"/>
<dbReference type="UCSC" id="F08F1.8.1">
    <property type="organism name" value="c. elegans"/>
</dbReference>
<dbReference type="AGR" id="WB:WBGene00006649"/>
<dbReference type="CTD" id="181097"/>
<dbReference type="WormBase" id="F08F1.8">
    <property type="protein sequence ID" value="CE27929"/>
    <property type="gene ID" value="WBGene00006649"/>
    <property type="gene designation" value="tth-1"/>
</dbReference>
<dbReference type="eggNOG" id="KOG4794">
    <property type="taxonomic scope" value="Eukaryota"/>
</dbReference>
<dbReference type="GeneTree" id="ENSGT00940000170493"/>
<dbReference type="HOGENOM" id="CLU_117354_0_0_1"/>
<dbReference type="InParanoid" id="O17389"/>
<dbReference type="OMA" id="PDKEAIQ"/>
<dbReference type="OrthoDB" id="2151618at2759"/>
<dbReference type="PhylomeDB" id="O17389"/>
<dbReference type="PRO" id="PR:O17389"/>
<dbReference type="Proteomes" id="UP000001940">
    <property type="component" value="Chromosome X"/>
</dbReference>
<dbReference type="Bgee" id="WBGene00006649">
    <property type="expression patterns" value="Expressed in pharyngeal muscle cell (C elegans) and 4 other cell types or tissues"/>
</dbReference>
<dbReference type="GO" id="GO:0070161">
    <property type="term" value="C:anchoring junction"/>
    <property type="evidence" value="ECO:0007669"/>
    <property type="project" value="UniProtKB-SubCell"/>
</dbReference>
<dbReference type="GO" id="GO:0005938">
    <property type="term" value="C:cell cortex"/>
    <property type="evidence" value="ECO:0007669"/>
    <property type="project" value="UniProtKB-SubCell"/>
</dbReference>
<dbReference type="GO" id="GO:0005856">
    <property type="term" value="C:cytoskeleton"/>
    <property type="evidence" value="ECO:0007669"/>
    <property type="project" value="UniProtKB-SubCell"/>
</dbReference>
<dbReference type="GO" id="GO:0005829">
    <property type="term" value="C:cytosol"/>
    <property type="evidence" value="ECO:0000318"/>
    <property type="project" value="GO_Central"/>
</dbReference>
<dbReference type="GO" id="GO:0003785">
    <property type="term" value="F:actin monomer binding"/>
    <property type="evidence" value="ECO:0000318"/>
    <property type="project" value="GO_Central"/>
</dbReference>
<dbReference type="GO" id="GO:0007015">
    <property type="term" value="P:actin filament organization"/>
    <property type="evidence" value="ECO:0007669"/>
    <property type="project" value="InterPro"/>
</dbReference>
<dbReference type="Gene3D" id="1.20.5.520">
    <property type="entry name" value="Single helix bin"/>
    <property type="match status" value="3"/>
</dbReference>
<dbReference type="InterPro" id="IPR001152">
    <property type="entry name" value="Beta-thymosin"/>
</dbReference>
<dbReference type="InterPro" id="IPR038386">
    <property type="entry name" value="Beta-thymosin_sf"/>
</dbReference>
<dbReference type="PANTHER" id="PTHR20940:SF1">
    <property type="entry name" value="CIBOULOT, ISOFORM A"/>
    <property type="match status" value="1"/>
</dbReference>
<dbReference type="PANTHER" id="PTHR20940">
    <property type="entry name" value="TETRA THYMOSIN"/>
    <property type="match status" value="1"/>
</dbReference>
<dbReference type="Pfam" id="PF01290">
    <property type="entry name" value="Thymosin"/>
    <property type="match status" value="3"/>
</dbReference>
<dbReference type="SMART" id="SM00152">
    <property type="entry name" value="THY"/>
    <property type="match status" value="3"/>
</dbReference>
<organism evidence="5">
    <name type="scientific">Caenorhabditis elegans</name>
    <dbReference type="NCBI Taxonomy" id="6239"/>
    <lineage>
        <taxon>Eukaryota</taxon>
        <taxon>Metazoa</taxon>
        <taxon>Ecdysozoa</taxon>
        <taxon>Nematoda</taxon>
        <taxon>Chromadorea</taxon>
        <taxon>Rhabditida</taxon>
        <taxon>Rhabditina</taxon>
        <taxon>Rhabditomorpha</taxon>
        <taxon>Rhabditoidea</taxon>
        <taxon>Rhabditidae</taxon>
        <taxon>Peloderinae</taxon>
        <taxon>Caenorhabditis</taxon>
    </lineage>
</organism>
<proteinExistence type="evidence at protein level"/>
<sequence>MAAVTELPKMNQELAGAVREGLELKKVETTEKNVLPTKEDVAEEKQHVERIHEIEHFDSTKLHSTPVKEKIVLPSADDIKQEKQHLELTDKINNFPSENLKKTETIEKNVLPSPTDVAREKTLQMAASFDKSALHHVETIVSTDVRVTEAQ</sequence>
<reference evidence="5" key="1">
    <citation type="journal article" date="1998" name="Science">
        <title>Genome sequence of the nematode C. elegans: a platform for investigating biology.</title>
        <authorList>
            <consortium name="The C. elegans sequencing consortium"/>
        </authorList>
    </citation>
    <scope>NUCLEOTIDE SEQUENCE [LARGE SCALE GENOMIC DNA]</scope>
    <source>
        <strain evidence="5">Bristol N2</strain>
    </source>
</reference>
<reference evidence="3" key="2">
    <citation type="journal article" date="2004" name="Mol. Biol. Cell">
        <title>TetraThymosinbeta is required for actin dynamics in Caenorhabditis elegans and acts via functionally different actin-binding repeats.</title>
        <authorList>
            <person name="Van Troys M."/>
            <person name="Ono K."/>
            <person name="Dewitte D."/>
            <person name="Jonckheere V."/>
            <person name="De Ruyck N."/>
            <person name="Vandekerckhove J."/>
            <person name="Ono S."/>
            <person name="Ampe C."/>
        </authorList>
    </citation>
    <scope>FUNCTION</scope>
    <scope>INTERACTION WITH G-ACTIN AND F-ACTIN</scope>
    <scope>SUBCELLULAR LOCATION</scope>
    <scope>TISSUE SPECIFICITY</scope>
    <scope>DEVELOPMENTAL STAGE</scope>
    <scope>DOMAIN</scope>
    <scope>DISRUPTION PHENOTYPE</scope>
    <scope>REPEAT</scope>
    <scope>MUTAGENESIS OF 24-LEU--VAL-27; 62-LEU--THR-65; 100-LEU--THR-103 AND 134-LEU--VAL-137</scope>
</reference>
<protein>
    <recommendedName>
        <fullName evidence="3">Thymosin beta</fullName>
    </recommendedName>
    <alternativeName>
        <fullName evidence="2">Tetrathymosin beta</fullName>
    </alternativeName>
</protein>
<accession>O17389</accession>
<name>TYB_CAEEL</name>
<gene>
    <name evidence="6" type="primary">tth-1</name>
    <name evidence="6" type="ORF">F08F1.8</name>
</gene>
<evidence type="ECO:0000269" key="1">
    <source>
    </source>
</evidence>
<evidence type="ECO:0000303" key="2">
    <source>
    </source>
</evidence>
<evidence type="ECO:0000305" key="3"/>
<evidence type="ECO:0000305" key="4">
    <source>
    </source>
</evidence>
<evidence type="ECO:0000312" key="5">
    <source>
        <dbReference type="Proteomes" id="UP000001940"/>
    </source>
</evidence>
<evidence type="ECO:0000312" key="6">
    <source>
        <dbReference type="WormBase" id="F08F1.8"/>
    </source>
</evidence>
<comment type="function">
    <text evidence="1">Plays an important role in the organization of the cytoskeleton by regulating actin polymerization in two ways. Firstly, by binding to and sequestering actin monomers (G actin) inhibits actin polymerization. Secondly, by binding directly filamentous actin (F actin) promotes actin polymerization. Regulates the formation of cortical actin in oocytes conferring them enough rigidity to sustain the contractions during ovulation.</text>
</comment>
<comment type="subunit">
    <text evidence="1">Interacts (via repeats 1, 2 and 4) with G-actin in a 1:3 ratio. Interacts (via repeats 2 and 3) with F-actin.</text>
</comment>
<comment type="subcellular location">
    <subcellularLocation>
        <location evidence="1">Cytoplasm</location>
        <location evidence="1">Cell cortex</location>
    </subcellularLocation>
    <subcellularLocation>
        <location evidence="1">Cytoplasm</location>
    </subcellularLocation>
    <subcellularLocation>
        <location evidence="1">Cell junction</location>
    </subcellularLocation>
    <subcellularLocation>
        <location evidence="4">Cytoplasm</location>
        <location evidence="4">Cytoskeleton</location>
    </subcellularLocation>
    <text evidence="1">Localizes to the cell cortex and the cytoplasm in oocytes and at the inside edges of membrane cubicles surrounding germ cell nuclei. Co-localizes with actin at the cell-cell contact in two-cell stage embryo.</text>
</comment>
<comment type="tissue specificity">
    <text evidence="1">At the comma stage, enriched in the developing nerve ring (at protein level). Ubiquitously expressed in larvae and adults with enrichment in the spermatheca, the intestinal tract and the posterior bulb of the pharynx (at protein level). Expressed in oocytes and in the gonad (at protein level).</text>
</comment>
<comment type="developmental stage">
    <text evidence="1">Expressed in embryo, larvae and adults (at protein level).</text>
</comment>
<comment type="domain">
    <text evidence="1">The 4 repeats act cooperatively in the binding of G actin.</text>
</comment>
<comment type="disruption phenotype">
    <text evidence="1">Lethal at the L3/L4 larval stages or at the young adult stage. Mutants are shorter and stouter, and fail to produce a viable progeny. In oocytes, actin is diffused in the cytoplasm and F-actin accumulation at the cell cortex is reduced resulting in deformed oocytes in the spermatheca and the uterus.</text>
</comment>
<comment type="similarity">
    <text evidence="3">Belongs to the thymosin beta family.</text>
</comment>